<evidence type="ECO:0000255" key="1">
    <source>
        <dbReference type="HAMAP-Rule" id="MF_00683"/>
    </source>
</evidence>
<evidence type="ECO:0000256" key="2">
    <source>
        <dbReference type="SAM" id="MobiDB-lite"/>
    </source>
</evidence>
<gene>
    <name evidence="1" type="primary">tmaR</name>
    <name type="ordered locus">APL_0709</name>
</gene>
<name>TMAR_ACTP2</name>
<proteinExistence type="inferred from homology"/>
<reference key="1">
    <citation type="journal article" date="2008" name="J. Bacteriol.">
        <title>The complete genome sequence of Actinobacillus pleuropneumoniae L20 (serotype 5b).</title>
        <authorList>
            <person name="Foote S.J."/>
            <person name="Bosse J.T."/>
            <person name="Bouevitch A.B."/>
            <person name="Langford P.R."/>
            <person name="Young N.M."/>
            <person name="Nash J.H.E."/>
        </authorList>
    </citation>
    <scope>NUCLEOTIDE SEQUENCE [LARGE SCALE GENOMIC DNA]</scope>
    <source>
        <strain>L20</strain>
    </source>
</reference>
<accession>A3N073</accession>
<comment type="function">
    <text evidence="1">Pole-localizer protein involved in the regulation of several cellular processes.</text>
</comment>
<comment type="subcellular location">
    <subcellularLocation>
        <location evidence="1">Cytoplasm</location>
    </subcellularLocation>
</comment>
<comment type="similarity">
    <text evidence="1">Belongs to the pole-localizer TmaR family.</text>
</comment>
<feature type="chain" id="PRO_1000044925" description="Pole-localizer protein TmaR">
    <location>
        <begin position="1"/>
        <end position="111"/>
    </location>
</feature>
<feature type="region of interest" description="Disordered" evidence="2">
    <location>
        <begin position="92"/>
        <end position="111"/>
    </location>
</feature>
<feature type="coiled-coil region" evidence="1">
    <location>
        <begin position="70"/>
        <end position="104"/>
    </location>
</feature>
<sequence length="111" mass="13360">MADVKKQSFQDMLDYVHLYRLKNKLHRETADNDRKIRDNQKRVLLLDNLNQYINDSMTVEDIRAIIANMRDDYENRVDDYMIRNAELSKQRREIRQKMAAHKTSASEKSEK</sequence>
<keyword id="KW-0175">Coiled coil</keyword>
<keyword id="KW-0963">Cytoplasm</keyword>
<keyword id="KW-1185">Reference proteome</keyword>
<organism>
    <name type="scientific">Actinobacillus pleuropneumoniae serotype 5b (strain L20)</name>
    <dbReference type="NCBI Taxonomy" id="416269"/>
    <lineage>
        <taxon>Bacteria</taxon>
        <taxon>Pseudomonadati</taxon>
        <taxon>Pseudomonadota</taxon>
        <taxon>Gammaproteobacteria</taxon>
        <taxon>Pasteurellales</taxon>
        <taxon>Pasteurellaceae</taxon>
        <taxon>Actinobacillus</taxon>
    </lineage>
</organism>
<protein>
    <recommendedName>
        <fullName evidence="1">Pole-localizer protein TmaR</fullName>
    </recommendedName>
</protein>
<dbReference type="EMBL" id="CP000569">
    <property type="protein sequence ID" value="ABN73809.1"/>
    <property type="molecule type" value="Genomic_DNA"/>
</dbReference>
<dbReference type="RefSeq" id="WP_005600925.1">
    <property type="nucleotide sequence ID" value="NC_009053.1"/>
</dbReference>
<dbReference type="SMR" id="A3N073"/>
<dbReference type="STRING" id="416269.APL_0709"/>
<dbReference type="EnsemblBacteria" id="ABN73809">
    <property type="protein sequence ID" value="ABN73809"/>
    <property type="gene ID" value="APL_0709"/>
</dbReference>
<dbReference type="KEGG" id="apl:APL_0709"/>
<dbReference type="eggNOG" id="COG2926">
    <property type="taxonomic scope" value="Bacteria"/>
</dbReference>
<dbReference type="HOGENOM" id="CLU_153146_0_0_6"/>
<dbReference type="Proteomes" id="UP000001432">
    <property type="component" value="Chromosome"/>
</dbReference>
<dbReference type="GO" id="GO:0005829">
    <property type="term" value="C:cytosol"/>
    <property type="evidence" value="ECO:0007669"/>
    <property type="project" value="TreeGrafter"/>
</dbReference>
<dbReference type="HAMAP" id="MF_00683">
    <property type="entry name" value="Pole_loc_TmaR"/>
    <property type="match status" value="1"/>
</dbReference>
<dbReference type="InterPro" id="IPR007458">
    <property type="entry name" value="DUF496"/>
</dbReference>
<dbReference type="NCBIfam" id="NF003844">
    <property type="entry name" value="PRK05423.1"/>
    <property type="match status" value="1"/>
</dbReference>
<dbReference type="PANTHER" id="PTHR39591">
    <property type="entry name" value="UPF0265 PROTEIN YEEX"/>
    <property type="match status" value="1"/>
</dbReference>
<dbReference type="PANTHER" id="PTHR39591:SF1">
    <property type="entry name" value="UPF0265 PROTEIN YEEX"/>
    <property type="match status" value="1"/>
</dbReference>
<dbReference type="Pfam" id="PF04363">
    <property type="entry name" value="DUF496"/>
    <property type="match status" value="1"/>
</dbReference>
<dbReference type="PIRSF" id="PIRSF028773">
    <property type="entry name" value="UCP028773"/>
    <property type="match status" value="1"/>
</dbReference>